<protein>
    <recommendedName>
        <fullName>Uncharacterized protein C14orf93 homolog</fullName>
    </recommendedName>
</protein>
<organism>
    <name type="scientific">Mus musculus</name>
    <name type="common">Mouse</name>
    <dbReference type="NCBI Taxonomy" id="10090"/>
    <lineage>
        <taxon>Eukaryota</taxon>
        <taxon>Metazoa</taxon>
        <taxon>Chordata</taxon>
        <taxon>Craniata</taxon>
        <taxon>Vertebrata</taxon>
        <taxon>Euteleostomi</taxon>
        <taxon>Mammalia</taxon>
        <taxon>Eutheria</taxon>
        <taxon>Euarchontoglires</taxon>
        <taxon>Glires</taxon>
        <taxon>Rodentia</taxon>
        <taxon>Myomorpha</taxon>
        <taxon>Muroidea</taxon>
        <taxon>Muridae</taxon>
        <taxon>Murinae</taxon>
        <taxon>Mus</taxon>
        <taxon>Mus</taxon>
    </lineage>
</organism>
<sequence>MSFSATILFSPPSGSEARCCCCACKSETSQGSTGSQGGNPPASTPITVTGHGLAVQSSEQLLHIIYQRVDKAVGLAEAALGLARANNELLKQLQEEVGELRQGKVCTADEDRESRARTPPPEEPGVLKGSPGEASNSLPAMEEECDSVGSGVQVVIEELRQLGAASTVGQGPLGFFAAPQRDARLPGCTLAAVEGAPLLNPMADDYVASEGSIQRVLVPAYAKQLSPATQLAIQRASSETGPESGTKLPATRPEGVLGSAALDSALDESGAGGAGELSRSLGFVGSPCRIRGTGQKNSRRKRDLVLSKLVHNVHNHITNDKRFNGSESIKSSWNISVVKFLLEKLKQELMVSPHNYTDKELKGACVAYFLTKRREYRNSLNPFKGLKEKEEKKLRSRRYRLFANRSSIMRHFGPEDQHLWKDVTEELMSDEEDSLNEPGVWVARSPRFRAQRLTELCYHLDANSKHGTKANRVYGPPSDRLPSVEAQLLPPELYNPNFQEDEGGGNEKGPVSPSYDQPHKTSCPDLNSFIEIKVEKDEYTL</sequence>
<reference key="1">
    <citation type="journal article" date="2004" name="Genome Res.">
        <title>The status, quality, and expansion of the NIH full-length cDNA project: the Mammalian Gene Collection (MGC).</title>
        <authorList>
            <consortium name="The MGC Project Team"/>
        </authorList>
    </citation>
    <scope>NUCLEOTIDE SEQUENCE [LARGE SCALE MRNA]</scope>
    <source>
        <tissue>Mammary tumor</tissue>
    </source>
</reference>
<reference key="2">
    <citation type="journal article" date="2010" name="Cell">
        <title>A tissue-specific atlas of mouse protein phosphorylation and expression.</title>
        <authorList>
            <person name="Huttlin E.L."/>
            <person name="Jedrychowski M.P."/>
            <person name="Elias J.E."/>
            <person name="Goswami T."/>
            <person name="Rad R."/>
            <person name="Beausoleil S.A."/>
            <person name="Villen J."/>
            <person name="Haas W."/>
            <person name="Sowa M.E."/>
            <person name="Gygi S.P."/>
        </authorList>
    </citation>
    <scope>PHOSPHORYLATION [LARGE SCALE ANALYSIS] AT THR-118; SER-286 AND SER-429</scope>
    <scope>IDENTIFICATION BY MASS SPECTROMETRY [LARGE SCALE ANALYSIS]</scope>
    <source>
        <tissue>Brown adipose tissue</tissue>
        <tissue>Kidney</tissue>
        <tissue>Lung</tissue>
    </source>
</reference>
<keyword id="KW-1017">Isopeptide bond</keyword>
<keyword id="KW-0597">Phosphoprotein</keyword>
<keyword id="KW-1185">Reference proteome</keyword>
<keyword id="KW-0964">Secreted</keyword>
<keyword id="KW-0732">Signal</keyword>
<keyword id="KW-0832">Ubl conjugation</keyword>
<comment type="subcellular location">
    <subcellularLocation>
        <location evidence="4">Secreted</location>
    </subcellularLocation>
</comment>
<dbReference type="EMBL" id="BC029624">
    <property type="protein sequence ID" value="AAH29624.1"/>
    <property type="molecule type" value="mRNA"/>
</dbReference>
<dbReference type="CCDS" id="CCDS27094.1"/>
<dbReference type="RefSeq" id="NP_083166.1">
    <property type="nucleotide sequence ID" value="NM_028890.2"/>
</dbReference>
<dbReference type="RefSeq" id="XP_006519681.1">
    <property type="nucleotide sequence ID" value="XM_006519618.5"/>
</dbReference>
<dbReference type="RefSeq" id="XP_006519682.1">
    <property type="nucleotide sequence ID" value="XM_006519619.3"/>
</dbReference>
<dbReference type="RefSeq" id="XP_006519683.1">
    <property type="nucleotide sequence ID" value="XM_006519620.5"/>
</dbReference>
<dbReference type="RefSeq" id="XP_011243512.1">
    <property type="nucleotide sequence ID" value="XM_011245210.4"/>
</dbReference>
<dbReference type="RefSeq" id="XP_036014772.1">
    <property type="nucleotide sequence ID" value="XM_036158879.1"/>
</dbReference>
<dbReference type="SMR" id="Q8K2W9"/>
<dbReference type="FunCoup" id="Q8K2W9">
    <property type="interactions" value="63"/>
</dbReference>
<dbReference type="STRING" id="10090.ENSMUSP00000022786"/>
<dbReference type="iPTMnet" id="Q8K2W9"/>
<dbReference type="PhosphoSitePlus" id="Q8K2W9"/>
<dbReference type="jPOST" id="Q8K2W9"/>
<dbReference type="PaxDb" id="10090-ENSMUSP00000022786"/>
<dbReference type="PeptideAtlas" id="Q8K2W9"/>
<dbReference type="Antibodypedia" id="120">
    <property type="antibodies" value="16 antibodies from 11 providers"/>
</dbReference>
<dbReference type="DNASU" id="74359"/>
<dbReference type="Ensembl" id="ENSMUST00000022786.6">
    <property type="protein sequence ID" value="ENSMUSP00000022786.5"/>
    <property type="gene ID" value="ENSMUSG00000022179.6"/>
</dbReference>
<dbReference type="GeneID" id="74359"/>
<dbReference type="KEGG" id="mmu:74359"/>
<dbReference type="UCSC" id="uc007twk.1">
    <property type="organism name" value="mouse"/>
</dbReference>
<dbReference type="AGR" id="MGI:1921609"/>
<dbReference type="MGI" id="MGI:1921609">
    <property type="gene designation" value="4931414P19Rik"/>
</dbReference>
<dbReference type="VEuPathDB" id="HostDB:ENSMUSG00000022179"/>
<dbReference type="eggNOG" id="ENOG502QR1B">
    <property type="taxonomic scope" value="Eukaryota"/>
</dbReference>
<dbReference type="GeneTree" id="ENSGT00390000012708"/>
<dbReference type="HOGENOM" id="CLU_037858_0_0_1"/>
<dbReference type="InParanoid" id="Q8K2W9"/>
<dbReference type="OMA" id="FDQSHKT"/>
<dbReference type="OrthoDB" id="9426338at2759"/>
<dbReference type="PhylomeDB" id="Q8K2W9"/>
<dbReference type="TreeFam" id="TF336941"/>
<dbReference type="BioGRID-ORCS" id="74359">
    <property type="hits" value="2 hits in 76 CRISPR screens"/>
</dbReference>
<dbReference type="PRO" id="PR:Q8K2W9"/>
<dbReference type="Proteomes" id="UP000000589">
    <property type="component" value="Chromosome 14"/>
</dbReference>
<dbReference type="RNAct" id="Q8K2W9">
    <property type="molecule type" value="protein"/>
</dbReference>
<dbReference type="Bgee" id="ENSMUSG00000022179">
    <property type="expression patterns" value="Expressed in interventricular septum and 168 other cell types or tissues"/>
</dbReference>
<dbReference type="ExpressionAtlas" id="Q8K2W9">
    <property type="expression patterns" value="baseline and differential"/>
</dbReference>
<dbReference type="GO" id="GO:0005576">
    <property type="term" value="C:extracellular region"/>
    <property type="evidence" value="ECO:0007669"/>
    <property type="project" value="UniProtKB-SubCell"/>
</dbReference>
<dbReference type="GO" id="GO:0030154">
    <property type="term" value="P:cell differentiation"/>
    <property type="evidence" value="ECO:0000315"/>
    <property type="project" value="MGI"/>
</dbReference>
<dbReference type="GO" id="GO:0010628">
    <property type="term" value="P:positive regulation of gene expression"/>
    <property type="evidence" value="ECO:0000315"/>
    <property type="project" value="MGI"/>
</dbReference>
<dbReference type="InterPro" id="IPR028101">
    <property type="entry name" value="DUF4616"/>
</dbReference>
<dbReference type="PANTHER" id="PTHR14375">
    <property type="entry name" value="SIMILAR TO RIKEN CDNA 4931414P19"/>
    <property type="match status" value="1"/>
</dbReference>
<dbReference type="PANTHER" id="PTHR14375:SF2">
    <property type="entry name" value="SIMILAR TO RIKEN CDNA 4931414P19"/>
    <property type="match status" value="1"/>
</dbReference>
<dbReference type="Pfam" id="PF15394">
    <property type="entry name" value="DUF4616"/>
    <property type="match status" value="1"/>
</dbReference>
<feature type="signal peptide" evidence="2">
    <location>
        <begin position="1"/>
        <end position="17"/>
    </location>
</feature>
<feature type="chain" id="PRO_0000020951" description="Uncharacterized protein C14orf93 homolog">
    <location>
        <begin position="18"/>
        <end position="541"/>
    </location>
</feature>
<feature type="region of interest" description="Disordered" evidence="3">
    <location>
        <begin position="28"/>
        <end position="47"/>
    </location>
</feature>
<feature type="region of interest" description="Disordered" evidence="3">
    <location>
        <begin position="103"/>
        <end position="138"/>
    </location>
</feature>
<feature type="region of interest" description="Disordered" evidence="3">
    <location>
        <begin position="232"/>
        <end position="254"/>
    </location>
</feature>
<feature type="region of interest" description="Disordered" evidence="3">
    <location>
        <begin position="494"/>
        <end position="526"/>
    </location>
</feature>
<feature type="compositionally biased region" description="Basic and acidic residues" evidence="3">
    <location>
        <begin position="103"/>
        <end position="116"/>
    </location>
</feature>
<feature type="compositionally biased region" description="Polar residues" evidence="3">
    <location>
        <begin position="232"/>
        <end position="243"/>
    </location>
</feature>
<feature type="modified residue" description="Phosphothreonine" evidence="5">
    <location>
        <position position="118"/>
    </location>
</feature>
<feature type="modified residue" description="Phosphoserine" evidence="1">
    <location>
        <position position="226"/>
    </location>
</feature>
<feature type="modified residue" description="Phosphoserine" evidence="5">
    <location>
        <position position="286"/>
    </location>
</feature>
<feature type="modified residue" description="Phosphoserine" evidence="5">
    <location>
        <position position="429"/>
    </location>
</feature>
<feature type="cross-link" description="Glycyl lysine isopeptide (Lys-Gly) (interchain with G-Cter in SUMO2)" evidence="1">
    <location>
        <position position="128"/>
    </location>
</feature>
<feature type="cross-link" description="Glycyl lysine isopeptide (Lys-Gly) (interchain with G-Cter in SUMO2)" evidence="1">
    <location>
        <position position="223"/>
    </location>
</feature>
<accession>Q8K2W9</accession>
<evidence type="ECO:0000250" key="1">
    <source>
        <dbReference type="UniProtKB" id="Q9H972"/>
    </source>
</evidence>
<evidence type="ECO:0000255" key="2"/>
<evidence type="ECO:0000256" key="3">
    <source>
        <dbReference type="SAM" id="MobiDB-lite"/>
    </source>
</evidence>
<evidence type="ECO:0000305" key="4"/>
<evidence type="ECO:0007744" key="5">
    <source>
    </source>
</evidence>
<proteinExistence type="evidence at protein level"/>
<name>CN093_MOUSE</name>